<proteinExistence type="inferred from homology"/>
<reference key="1">
    <citation type="journal article" date="2008" name="J. Bacteriol.">
        <title>The pangenome structure of Escherichia coli: comparative genomic analysis of E. coli commensal and pathogenic isolates.</title>
        <authorList>
            <person name="Rasko D.A."/>
            <person name="Rosovitz M.J."/>
            <person name="Myers G.S.A."/>
            <person name="Mongodin E.F."/>
            <person name="Fricke W.F."/>
            <person name="Gajer P."/>
            <person name="Crabtree J."/>
            <person name="Sebaihia M."/>
            <person name="Thomson N.R."/>
            <person name="Chaudhuri R."/>
            <person name="Henderson I.R."/>
            <person name="Sperandio V."/>
            <person name="Ravel J."/>
        </authorList>
    </citation>
    <scope>NUCLEOTIDE SEQUENCE [LARGE SCALE GENOMIC DNA]</scope>
    <source>
        <strain>HS</strain>
    </source>
</reference>
<evidence type="ECO:0000255" key="1">
    <source>
        <dbReference type="HAMAP-Rule" id="MF_01630"/>
    </source>
</evidence>
<comment type="function">
    <text evidence="1">Catalytic subunit of the periplasmic nitrate reductase complex NapAB. Receives electrons from NapB and catalyzes the reduction of nitrate to nitrite.</text>
</comment>
<comment type="catalytic activity">
    <reaction evidence="1">
        <text>2 Fe(II)-[cytochrome] + nitrate + 2 H(+) = 2 Fe(III)-[cytochrome] + nitrite + H2O</text>
        <dbReference type="Rhea" id="RHEA:12909"/>
        <dbReference type="Rhea" id="RHEA-COMP:11777"/>
        <dbReference type="Rhea" id="RHEA-COMP:11778"/>
        <dbReference type="ChEBI" id="CHEBI:15377"/>
        <dbReference type="ChEBI" id="CHEBI:15378"/>
        <dbReference type="ChEBI" id="CHEBI:16301"/>
        <dbReference type="ChEBI" id="CHEBI:17632"/>
        <dbReference type="ChEBI" id="CHEBI:29033"/>
        <dbReference type="ChEBI" id="CHEBI:29034"/>
        <dbReference type="EC" id="1.9.6.1"/>
    </reaction>
</comment>
<comment type="cofactor">
    <cofactor evidence="1">
        <name>[4Fe-4S] cluster</name>
        <dbReference type="ChEBI" id="CHEBI:49883"/>
    </cofactor>
    <text evidence="1">Binds 1 [4Fe-4S] cluster.</text>
</comment>
<comment type="cofactor">
    <cofactor evidence="1">
        <name>Mo-bis(molybdopterin guanine dinucleotide)</name>
        <dbReference type="ChEBI" id="CHEBI:60539"/>
    </cofactor>
    <text evidence="1">Binds 1 molybdenum-bis(molybdopterin guanine dinucleotide) (Mo-bis-MGD) cofactor per subunit.</text>
</comment>
<comment type="subunit">
    <text evidence="1">Component of the periplasmic nitrate reductase NapAB complex composed of NapA and NapB.</text>
</comment>
<comment type="subcellular location">
    <subcellularLocation>
        <location evidence="1">Periplasm</location>
    </subcellularLocation>
</comment>
<comment type="PTM">
    <text evidence="1">Predicted to be exported by the Tat system. The position of the signal peptide cleavage has not been experimentally proven.</text>
</comment>
<comment type="similarity">
    <text evidence="1">Belongs to the prokaryotic molybdopterin-containing oxidoreductase family. NasA/NapA/NarB subfamily.</text>
</comment>
<keyword id="KW-0004">4Fe-4S</keyword>
<keyword id="KW-0249">Electron transport</keyword>
<keyword id="KW-0408">Iron</keyword>
<keyword id="KW-0411">Iron-sulfur</keyword>
<keyword id="KW-0479">Metal-binding</keyword>
<keyword id="KW-0500">Molybdenum</keyword>
<keyword id="KW-0534">Nitrate assimilation</keyword>
<keyword id="KW-0560">Oxidoreductase</keyword>
<keyword id="KW-0574">Periplasm</keyword>
<keyword id="KW-0732">Signal</keyword>
<keyword id="KW-0813">Transport</keyword>
<dbReference type="EC" id="1.9.6.1" evidence="1"/>
<dbReference type="EMBL" id="CP000802">
    <property type="protein sequence ID" value="ABV06622.1"/>
    <property type="molecule type" value="Genomic_DNA"/>
</dbReference>
<dbReference type="RefSeq" id="WP_000778067.1">
    <property type="nucleotide sequence ID" value="NC_009800.1"/>
</dbReference>
<dbReference type="SMR" id="A8A268"/>
<dbReference type="GeneID" id="93774972"/>
<dbReference type="KEGG" id="ecx:EcHS_A2344"/>
<dbReference type="HOGENOM" id="CLU_000422_13_4_6"/>
<dbReference type="GO" id="GO:0016020">
    <property type="term" value="C:membrane"/>
    <property type="evidence" value="ECO:0007669"/>
    <property type="project" value="TreeGrafter"/>
</dbReference>
<dbReference type="GO" id="GO:0009325">
    <property type="term" value="C:nitrate reductase complex"/>
    <property type="evidence" value="ECO:0007669"/>
    <property type="project" value="TreeGrafter"/>
</dbReference>
<dbReference type="GO" id="GO:0042597">
    <property type="term" value="C:periplasmic space"/>
    <property type="evidence" value="ECO:0007669"/>
    <property type="project" value="UniProtKB-SubCell"/>
</dbReference>
<dbReference type="GO" id="GO:0051539">
    <property type="term" value="F:4 iron, 4 sulfur cluster binding"/>
    <property type="evidence" value="ECO:0007669"/>
    <property type="project" value="UniProtKB-KW"/>
</dbReference>
<dbReference type="GO" id="GO:0009055">
    <property type="term" value="F:electron transfer activity"/>
    <property type="evidence" value="ECO:0007669"/>
    <property type="project" value="UniProtKB-UniRule"/>
</dbReference>
<dbReference type="GO" id="GO:0005506">
    <property type="term" value="F:iron ion binding"/>
    <property type="evidence" value="ECO:0007669"/>
    <property type="project" value="UniProtKB-UniRule"/>
</dbReference>
<dbReference type="GO" id="GO:0030151">
    <property type="term" value="F:molybdenum ion binding"/>
    <property type="evidence" value="ECO:0007669"/>
    <property type="project" value="InterPro"/>
</dbReference>
<dbReference type="GO" id="GO:0043546">
    <property type="term" value="F:molybdopterin cofactor binding"/>
    <property type="evidence" value="ECO:0007669"/>
    <property type="project" value="InterPro"/>
</dbReference>
<dbReference type="GO" id="GO:0050140">
    <property type="term" value="F:nitrate reductase (cytochrome) activity"/>
    <property type="evidence" value="ECO:0007669"/>
    <property type="project" value="UniProtKB-EC"/>
</dbReference>
<dbReference type="GO" id="GO:0045333">
    <property type="term" value="P:cellular respiration"/>
    <property type="evidence" value="ECO:0007669"/>
    <property type="project" value="UniProtKB-ARBA"/>
</dbReference>
<dbReference type="GO" id="GO:0006777">
    <property type="term" value="P:Mo-molybdopterin cofactor biosynthetic process"/>
    <property type="evidence" value="ECO:0007669"/>
    <property type="project" value="UniProtKB-UniRule"/>
</dbReference>
<dbReference type="GO" id="GO:0042128">
    <property type="term" value="P:nitrate assimilation"/>
    <property type="evidence" value="ECO:0007669"/>
    <property type="project" value="UniProtKB-UniRule"/>
</dbReference>
<dbReference type="CDD" id="cd02791">
    <property type="entry name" value="MopB_CT_Nitrate-R-NapA-like"/>
    <property type="match status" value="1"/>
</dbReference>
<dbReference type="CDD" id="cd02754">
    <property type="entry name" value="MopB_Nitrate-R-NapA-like"/>
    <property type="match status" value="1"/>
</dbReference>
<dbReference type="FunFam" id="2.40.40.20:FF:000005">
    <property type="entry name" value="Periplasmic nitrate reductase"/>
    <property type="match status" value="1"/>
</dbReference>
<dbReference type="FunFam" id="3.40.228.10:FF:000001">
    <property type="entry name" value="Periplasmic nitrate reductase"/>
    <property type="match status" value="1"/>
</dbReference>
<dbReference type="Gene3D" id="2.40.40.20">
    <property type="match status" value="1"/>
</dbReference>
<dbReference type="Gene3D" id="3.30.200.210">
    <property type="match status" value="1"/>
</dbReference>
<dbReference type="Gene3D" id="3.40.50.740">
    <property type="match status" value="1"/>
</dbReference>
<dbReference type="Gene3D" id="3.40.228.10">
    <property type="entry name" value="Dimethylsulfoxide Reductase, domain 2"/>
    <property type="match status" value="1"/>
</dbReference>
<dbReference type="HAMAP" id="MF_01630">
    <property type="entry name" value="Nitrate_reduct_NapA"/>
    <property type="match status" value="1"/>
</dbReference>
<dbReference type="InterPro" id="IPR009010">
    <property type="entry name" value="Asp_de-COase-like_dom_sf"/>
</dbReference>
<dbReference type="InterPro" id="IPR041957">
    <property type="entry name" value="CT_Nitrate-R-NapA-like"/>
</dbReference>
<dbReference type="InterPro" id="IPR006657">
    <property type="entry name" value="MoPterin_dinucl-bd_dom"/>
</dbReference>
<dbReference type="InterPro" id="IPR006656">
    <property type="entry name" value="Mopterin_OxRdtase"/>
</dbReference>
<dbReference type="InterPro" id="IPR006963">
    <property type="entry name" value="Mopterin_OxRdtase_4Fe-4S_dom"/>
</dbReference>
<dbReference type="InterPro" id="IPR027467">
    <property type="entry name" value="MopterinOxRdtase_cofactor_BS"/>
</dbReference>
<dbReference type="InterPro" id="IPR010051">
    <property type="entry name" value="Periplasm_NO3_reductase_lsu"/>
</dbReference>
<dbReference type="InterPro" id="IPR050123">
    <property type="entry name" value="Prok_molybdopt-oxidoreductase"/>
</dbReference>
<dbReference type="InterPro" id="IPR006311">
    <property type="entry name" value="TAT_signal"/>
</dbReference>
<dbReference type="InterPro" id="IPR019546">
    <property type="entry name" value="TAT_signal_bac_arc"/>
</dbReference>
<dbReference type="NCBIfam" id="TIGR01706">
    <property type="entry name" value="NAPA"/>
    <property type="match status" value="1"/>
</dbReference>
<dbReference type="NCBIfam" id="NF010055">
    <property type="entry name" value="PRK13532.1"/>
    <property type="match status" value="1"/>
</dbReference>
<dbReference type="NCBIfam" id="TIGR01409">
    <property type="entry name" value="TAT_signal_seq"/>
    <property type="match status" value="1"/>
</dbReference>
<dbReference type="PANTHER" id="PTHR43105:SF11">
    <property type="entry name" value="PERIPLASMIC NITRATE REDUCTASE"/>
    <property type="match status" value="1"/>
</dbReference>
<dbReference type="PANTHER" id="PTHR43105">
    <property type="entry name" value="RESPIRATORY NITRATE REDUCTASE"/>
    <property type="match status" value="1"/>
</dbReference>
<dbReference type="Pfam" id="PF04879">
    <property type="entry name" value="Molybdop_Fe4S4"/>
    <property type="match status" value="1"/>
</dbReference>
<dbReference type="Pfam" id="PF00384">
    <property type="entry name" value="Molybdopterin"/>
    <property type="match status" value="1"/>
</dbReference>
<dbReference type="Pfam" id="PF01568">
    <property type="entry name" value="Molydop_binding"/>
    <property type="match status" value="1"/>
</dbReference>
<dbReference type="SMART" id="SM00926">
    <property type="entry name" value="Molybdop_Fe4S4"/>
    <property type="match status" value="1"/>
</dbReference>
<dbReference type="SUPFAM" id="SSF50692">
    <property type="entry name" value="ADC-like"/>
    <property type="match status" value="1"/>
</dbReference>
<dbReference type="SUPFAM" id="SSF53706">
    <property type="entry name" value="Formate dehydrogenase/DMSO reductase, domains 1-3"/>
    <property type="match status" value="1"/>
</dbReference>
<dbReference type="PROSITE" id="PS51669">
    <property type="entry name" value="4FE4S_MOW_BIS_MGD"/>
    <property type="match status" value="1"/>
</dbReference>
<dbReference type="PROSITE" id="PS00551">
    <property type="entry name" value="MOLYBDOPTERIN_PROK_1"/>
    <property type="match status" value="1"/>
</dbReference>
<dbReference type="PROSITE" id="PS51318">
    <property type="entry name" value="TAT"/>
    <property type="match status" value="1"/>
</dbReference>
<sequence>MKLSRRSFMKANAVAAAAAAAGLSVPGVARAVVGQQEAIKWDKAPCRFCGTGCGVLVGTQQGRVVACQGDPDAPVNRGLNCIKGYFLPKIMYGKDRLTQPLLRMKNGKYDKEGEFTPITWDQAFDVMEEKFKTALKEKGPESIGMFGSGQWTIWEGYAASKLFKAGFRSNNIDPNARHCMASAVVGFMRTFGMDEPMGCYDDIEQADAFVLWGANMAEMHPILWSRITNRRLSNQNVTVAVLSTYQHRSFELADNGIIFTPQSDLVILNYIANYIIQNNAINQDFFSKHVNLRKGATDIGYGLRPTHPLEKAAKNPGSDASEPMSFEDYKAFVAEYTLEKTAEMTGVPKDQLEQLAQLYADPNKKVISYWTMGFNQHTRGVWANNLVYNLHLLTGKISQPGCGPFSLTGQPSACGTAREVGTFAHRLPADMVVTNEKHRDICEKKWNIPSGTIPAKIGLHAVAQDRALKDGKLNVYWTMCTNNMQAGPNINEERMPGWRDPRNFIIVSDPYPTVSALAADLILPTAMWVEKEGAYGNAERRTQFWRQQVQAPGEAKSDLWQLVQFSRRFKTEEVWPEELLAKKPELRGKTLYEVLYATPEVSKFPVSELAEDQLNDESRELGFYLQKGLFEEYAWFGRGHGHDLAPFDDYHKARGLRWPVVNGKETQWRYSEGNDPYVKAGEGYKFYGKPDGKAVIFALPFEPAAEAPDEEYDLWLSTGRVLEHWHTGSMTRRVPELHRAFPEAVLFIHPLDAKARDLRRGDKVKVVSRRGEVISIVETRGRNRPPQGLVYMPFFDAAQLVNKLTLDATDPLSKETDFKKCAVKLEKV</sequence>
<name>NAPA_ECOHS</name>
<organism>
    <name type="scientific">Escherichia coli O9:H4 (strain HS)</name>
    <dbReference type="NCBI Taxonomy" id="331112"/>
    <lineage>
        <taxon>Bacteria</taxon>
        <taxon>Pseudomonadati</taxon>
        <taxon>Pseudomonadota</taxon>
        <taxon>Gammaproteobacteria</taxon>
        <taxon>Enterobacterales</taxon>
        <taxon>Enterobacteriaceae</taxon>
        <taxon>Escherichia</taxon>
    </lineage>
</organism>
<protein>
    <recommendedName>
        <fullName evidence="1">Periplasmic nitrate reductase</fullName>
        <ecNumber evidence="1">1.9.6.1</ecNumber>
    </recommendedName>
</protein>
<gene>
    <name evidence="1" type="primary">napA</name>
    <name type="ordered locus">EcHS_A2344</name>
</gene>
<accession>A8A268</accession>
<feature type="signal peptide" description="Tat-type signal" evidence="1">
    <location>
        <begin position="1"/>
        <end position="31"/>
    </location>
</feature>
<feature type="chain" id="PRO_1000069717" description="Periplasmic nitrate reductase" evidence="1">
    <location>
        <begin position="32"/>
        <end position="828"/>
    </location>
</feature>
<feature type="domain" description="4Fe-4S Mo/W bis-MGD-type" evidence="1">
    <location>
        <begin position="39"/>
        <end position="95"/>
    </location>
</feature>
<feature type="binding site" evidence="1">
    <location>
        <position position="46"/>
    </location>
    <ligand>
        <name>[4Fe-4S] cluster</name>
        <dbReference type="ChEBI" id="CHEBI:49883"/>
    </ligand>
</feature>
<feature type="binding site" evidence="1">
    <location>
        <position position="49"/>
    </location>
    <ligand>
        <name>[4Fe-4S] cluster</name>
        <dbReference type="ChEBI" id="CHEBI:49883"/>
    </ligand>
</feature>
<feature type="binding site" evidence="1">
    <location>
        <position position="53"/>
    </location>
    <ligand>
        <name>[4Fe-4S] cluster</name>
        <dbReference type="ChEBI" id="CHEBI:49883"/>
    </ligand>
</feature>
<feature type="binding site" evidence="1">
    <location>
        <position position="81"/>
    </location>
    <ligand>
        <name>[4Fe-4S] cluster</name>
        <dbReference type="ChEBI" id="CHEBI:49883"/>
    </ligand>
</feature>
<feature type="binding site" evidence="1">
    <location>
        <position position="83"/>
    </location>
    <ligand>
        <name>Mo-bis(molybdopterin guanine dinucleotide)</name>
        <dbReference type="ChEBI" id="CHEBI:60539"/>
    </ligand>
</feature>
<feature type="binding site" evidence="1">
    <location>
        <position position="150"/>
    </location>
    <ligand>
        <name>Mo-bis(molybdopterin guanine dinucleotide)</name>
        <dbReference type="ChEBI" id="CHEBI:60539"/>
    </ligand>
</feature>
<feature type="binding site" evidence="1">
    <location>
        <position position="175"/>
    </location>
    <ligand>
        <name>Mo-bis(molybdopterin guanine dinucleotide)</name>
        <dbReference type="ChEBI" id="CHEBI:60539"/>
    </ligand>
</feature>
<feature type="binding site" evidence="1">
    <location>
        <position position="179"/>
    </location>
    <ligand>
        <name>Mo-bis(molybdopterin guanine dinucleotide)</name>
        <dbReference type="ChEBI" id="CHEBI:60539"/>
    </ligand>
</feature>
<feature type="binding site" evidence="1">
    <location>
        <begin position="212"/>
        <end position="219"/>
    </location>
    <ligand>
        <name>Mo-bis(molybdopterin guanine dinucleotide)</name>
        <dbReference type="ChEBI" id="CHEBI:60539"/>
    </ligand>
</feature>
<feature type="binding site" evidence="1">
    <location>
        <begin position="243"/>
        <end position="247"/>
    </location>
    <ligand>
        <name>Mo-bis(molybdopterin guanine dinucleotide)</name>
        <dbReference type="ChEBI" id="CHEBI:60539"/>
    </ligand>
</feature>
<feature type="binding site" evidence="1">
    <location>
        <begin position="262"/>
        <end position="264"/>
    </location>
    <ligand>
        <name>Mo-bis(molybdopterin guanine dinucleotide)</name>
        <dbReference type="ChEBI" id="CHEBI:60539"/>
    </ligand>
</feature>
<feature type="binding site" evidence="1">
    <location>
        <position position="372"/>
    </location>
    <ligand>
        <name>Mo-bis(molybdopterin guanine dinucleotide)</name>
        <dbReference type="ChEBI" id="CHEBI:60539"/>
    </ligand>
</feature>
<feature type="binding site" evidence="1">
    <location>
        <position position="376"/>
    </location>
    <ligand>
        <name>Mo-bis(molybdopterin guanine dinucleotide)</name>
        <dbReference type="ChEBI" id="CHEBI:60539"/>
    </ligand>
</feature>
<feature type="binding site" evidence="1">
    <location>
        <position position="482"/>
    </location>
    <ligand>
        <name>Mo-bis(molybdopterin guanine dinucleotide)</name>
        <dbReference type="ChEBI" id="CHEBI:60539"/>
    </ligand>
</feature>
<feature type="binding site" evidence="1">
    <location>
        <begin position="508"/>
        <end position="509"/>
    </location>
    <ligand>
        <name>Mo-bis(molybdopterin guanine dinucleotide)</name>
        <dbReference type="ChEBI" id="CHEBI:60539"/>
    </ligand>
</feature>
<feature type="binding site" evidence="1">
    <location>
        <position position="531"/>
    </location>
    <ligand>
        <name>Mo-bis(molybdopterin guanine dinucleotide)</name>
        <dbReference type="ChEBI" id="CHEBI:60539"/>
    </ligand>
</feature>
<feature type="binding site" evidence="1">
    <location>
        <position position="558"/>
    </location>
    <ligand>
        <name>Mo-bis(molybdopterin guanine dinucleotide)</name>
        <dbReference type="ChEBI" id="CHEBI:60539"/>
    </ligand>
</feature>
<feature type="binding site" evidence="1">
    <location>
        <begin position="718"/>
        <end position="727"/>
    </location>
    <ligand>
        <name>Mo-bis(molybdopterin guanine dinucleotide)</name>
        <dbReference type="ChEBI" id="CHEBI:60539"/>
    </ligand>
</feature>
<feature type="binding site" evidence="1">
    <location>
        <position position="794"/>
    </location>
    <ligand>
        <name>substrate</name>
    </ligand>
</feature>
<feature type="binding site" evidence="1">
    <location>
        <position position="802"/>
    </location>
    <ligand>
        <name>Mo-bis(molybdopterin guanine dinucleotide)</name>
        <dbReference type="ChEBI" id="CHEBI:60539"/>
    </ligand>
</feature>
<feature type="binding site" evidence="1">
    <location>
        <position position="819"/>
    </location>
    <ligand>
        <name>Mo-bis(molybdopterin guanine dinucleotide)</name>
        <dbReference type="ChEBI" id="CHEBI:60539"/>
    </ligand>
</feature>